<organism>
    <name type="scientific">Trypanosoma brucei brucei</name>
    <dbReference type="NCBI Taxonomy" id="5702"/>
    <lineage>
        <taxon>Eukaryota</taxon>
        <taxon>Discoba</taxon>
        <taxon>Euglenozoa</taxon>
        <taxon>Kinetoplastea</taxon>
        <taxon>Metakinetoplastina</taxon>
        <taxon>Trypanosomatida</taxon>
        <taxon>Trypanosomatidae</taxon>
        <taxon>Trypanosoma</taxon>
    </lineage>
</organism>
<protein>
    <recommendedName>
        <fullName>Putative DEAD-box RNA helicase HEL64</fullName>
        <ecNumber>3.6.4.13</ecNumber>
    </recommendedName>
</protein>
<evidence type="ECO:0000255" key="1">
    <source>
        <dbReference type="PROSITE-ProRule" id="PRU00541"/>
    </source>
</evidence>
<evidence type="ECO:0000255" key="2">
    <source>
        <dbReference type="PROSITE-ProRule" id="PRU00542"/>
    </source>
</evidence>
<evidence type="ECO:0000256" key="3">
    <source>
        <dbReference type="SAM" id="MobiDB-lite"/>
    </source>
</evidence>
<evidence type="ECO:0000305" key="4"/>
<accession>Q26696</accession>
<sequence>MEETYSPFTGRQGQYNQGYNGGGRRDSRGGMGERIKPVDWGNVSLVPGNWKVLDGKAIKKAGEIKTSTPEAGQLSEEEATKWREEHVITIFGDDCPPPMSSFDHLCGIVPPYLLKKLTAQNFTAPTPVQAQSWPVLLSGRDLVGVAKTGSGKTLGFMVPALAHIAVQEPLRSGDGPMVVVLAPTRELAQQIEEETKKVIPGDVYCGCVYGGAPKGPQLGLLRRGVHILVATPGRLIDFLDIKRINLHRVTYLVLDEADRMLDMGFEPQVRKICGQIRPDRQTVMFSATWPREIQRLAAEFQKQWIRISVGSTELQANKDVTQRFILTQEFAKQDELRKLMQEHREERVLVFCKMKRTADELERQLRRWGYDAMAIHGDKEQRQREFILARFRKDPRLCLVATDVAARGLDIKQLETVINYDFPMQIDDYVHRIGRTGRAGGEGRCVYLITKKEAQITPSVLKELIGILERAQQEIPDWMIEWNAQQPRYQVKRNRGMNGFGRHQSAPFLRNGHRPSFSANGNYSAHGNGTFGLGKHNDDAVPFSSSAIQYKRFDSDDEAEPSRKKYAR</sequence>
<feature type="chain" id="PRO_0000055047" description="Putative DEAD-box RNA helicase HEL64">
    <location>
        <begin position="1"/>
        <end position="568"/>
    </location>
</feature>
<feature type="domain" description="Helicase ATP-binding" evidence="1">
    <location>
        <begin position="133"/>
        <end position="307"/>
    </location>
</feature>
<feature type="domain" description="Helicase C-terminal" evidence="2">
    <location>
        <begin position="335"/>
        <end position="483"/>
    </location>
</feature>
<feature type="region of interest" description="Disordered" evidence="3">
    <location>
        <begin position="1"/>
        <end position="34"/>
    </location>
</feature>
<feature type="short sequence motif" description="Q motif">
    <location>
        <begin position="102"/>
        <end position="130"/>
    </location>
</feature>
<feature type="short sequence motif" description="DEAD box">
    <location>
        <begin position="255"/>
        <end position="258"/>
    </location>
</feature>
<feature type="compositionally biased region" description="Basic and acidic residues" evidence="3">
    <location>
        <begin position="23"/>
        <end position="34"/>
    </location>
</feature>
<feature type="binding site" evidence="1">
    <location>
        <begin position="146"/>
        <end position="153"/>
    </location>
    <ligand>
        <name>ATP</name>
        <dbReference type="ChEBI" id="CHEBI:30616"/>
    </ligand>
</feature>
<reference key="1">
    <citation type="journal article" date="1995" name="Mol. Biochem. Parasitol.">
        <title>A putative RNA helicase of the DEAD box family from Trypanosoma brucei.</title>
        <authorList>
            <person name="Missel A."/>
            <person name="Norskau G."/>
            <person name="Shu H.H."/>
            <person name="Goringer H.U."/>
        </authorList>
    </citation>
    <scope>NUCLEOTIDE SEQUENCE [GENOMIC DNA]</scope>
    <source>
        <strain>IsTar I.7</strain>
    </source>
</reference>
<dbReference type="EC" id="3.6.4.13"/>
<dbReference type="EMBL" id="U29199">
    <property type="protein sequence ID" value="AAC46964.1"/>
    <property type="molecule type" value="Genomic_DNA"/>
</dbReference>
<dbReference type="SMR" id="Q26696"/>
<dbReference type="GO" id="GO:0005829">
    <property type="term" value="C:cytosol"/>
    <property type="evidence" value="ECO:0000314"/>
    <property type="project" value="GeneDB"/>
</dbReference>
<dbReference type="GO" id="GO:0005730">
    <property type="term" value="C:nucleolus"/>
    <property type="evidence" value="ECO:0000314"/>
    <property type="project" value="GeneDB"/>
</dbReference>
<dbReference type="GO" id="GO:0005634">
    <property type="term" value="C:nucleus"/>
    <property type="evidence" value="ECO:0000314"/>
    <property type="project" value="GeneDB"/>
</dbReference>
<dbReference type="GO" id="GO:0005524">
    <property type="term" value="F:ATP binding"/>
    <property type="evidence" value="ECO:0000255"/>
    <property type="project" value="GeneDB"/>
</dbReference>
<dbReference type="GO" id="GO:0016887">
    <property type="term" value="F:ATP hydrolysis activity"/>
    <property type="evidence" value="ECO:0007669"/>
    <property type="project" value="RHEA"/>
</dbReference>
<dbReference type="GO" id="GO:0003723">
    <property type="term" value="F:RNA binding"/>
    <property type="evidence" value="ECO:0007669"/>
    <property type="project" value="UniProtKB-KW"/>
</dbReference>
<dbReference type="GO" id="GO:0003724">
    <property type="term" value="F:RNA helicase activity"/>
    <property type="evidence" value="ECO:0007669"/>
    <property type="project" value="UniProtKB-EC"/>
</dbReference>
<dbReference type="GO" id="GO:0006139">
    <property type="term" value="P:nucleobase-containing compound metabolic process"/>
    <property type="evidence" value="ECO:0000255"/>
    <property type="project" value="GeneDB"/>
</dbReference>
<dbReference type="CDD" id="cd17966">
    <property type="entry name" value="DEADc_DDX5_DDX17"/>
    <property type="match status" value="1"/>
</dbReference>
<dbReference type="CDD" id="cd18787">
    <property type="entry name" value="SF2_C_DEAD"/>
    <property type="match status" value="1"/>
</dbReference>
<dbReference type="FunFam" id="3.40.50.300:FF:000008">
    <property type="entry name" value="ATP-dependent RNA helicase RhlB"/>
    <property type="match status" value="1"/>
</dbReference>
<dbReference type="FunFam" id="3.40.50.300:FF:000079">
    <property type="entry name" value="probable ATP-dependent RNA helicase DDX17"/>
    <property type="match status" value="1"/>
</dbReference>
<dbReference type="Gene3D" id="3.40.50.300">
    <property type="entry name" value="P-loop containing nucleotide triphosphate hydrolases"/>
    <property type="match status" value="2"/>
</dbReference>
<dbReference type="InterPro" id="IPR011545">
    <property type="entry name" value="DEAD/DEAH_box_helicase_dom"/>
</dbReference>
<dbReference type="InterPro" id="IPR014001">
    <property type="entry name" value="Helicase_ATP-bd"/>
</dbReference>
<dbReference type="InterPro" id="IPR001650">
    <property type="entry name" value="Helicase_C-like"/>
</dbReference>
<dbReference type="InterPro" id="IPR027417">
    <property type="entry name" value="P-loop_NTPase"/>
</dbReference>
<dbReference type="InterPro" id="IPR000629">
    <property type="entry name" value="RNA-helicase_DEAD-box_CS"/>
</dbReference>
<dbReference type="PANTHER" id="PTHR47958">
    <property type="entry name" value="ATP-DEPENDENT RNA HELICASE DBP3"/>
    <property type="match status" value="1"/>
</dbReference>
<dbReference type="Pfam" id="PF00270">
    <property type="entry name" value="DEAD"/>
    <property type="match status" value="1"/>
</dbReference>
<dbReference type="Pfam" id="PF00271">
    <property type="entry name" value="Helicase_C"/>
    <property type="match status" value="1"/>
</dbReference>
<dbReference type="SMART" id="SM00487">
    <property type="entry name" value="DEXDc"/>
    <property type="match status" value="1"/>
</dbReference>
<dbReference type="SMART" id="SM00490">
    <property type="entry name" value="HELICc"/>
    <property type="match status" value="1"/>
</dbReference>
<dbReference type="SUPFAM" id="SSF52540">
    <property type="entry name" value="P-loop containing nucleoside triphosphate hydrolases"/>
    <property type="match status" value="1"/>
</dbReference>
<dbReference type="PROSITE" id="PS00039">
    <property type="entry name" value="DEAD_ATP_HELICASE"/>
    <property type="match status" value="1"/>
</dbReference>
<dbReference type="PROSITE" id="PS51192">
    <property type="entry name" value="HELICASE_ATP_BIND_1"/>
    <property type="match status" value="1"/>
</dbReference>
<dbReference type="PROSITE" id="PS51194">
    <property type="entry name" value="HELICASE_CTER"/>
    <property type="match status" value="1"/>
</dbReference>
<dbReference type="PROSITE" id="PS51195">
    <property type="entry name" value="Q_MOTIF"/>
    <property type="match status" value="1"/>
</dbReference>
<proteinExistence type="inferred from homology"/>
<keyword id="KW-0067">ATP-binding</keyword>
<keyword id="KW-0347">Helicase</keyword>
<keyword id="KW-0378">Hydrolase</keyword>
<keyword id="KW-0547">Nucleotide-binding</keyword>
<keyword id="KW-0539">Nucleus</keyword>
<keyword id="KW-0694">RNA-binding</keyword>
<gene>
    <name type="primary">HEL64</name>
</gene>
<comment type="catalytic activity">
    <reaction>
        <text>ATP + H2O = ADP + phosphate + H(+)</text>
        <dbReference type="Rhea" id="RHEA:13065"/>
        <dbReference type="ChEBI" id="CHEBI:15377"/>
        <dbReference type="ChEBI" id="CHEBI:15378"/>
        <dbReference type="ChEBI" id="CHEBI:30616"/>
        <dbReference type="ChEBI" id="CHEBI:43474"/>
        <dbReference type="ChEBI" id="CHEBI:456216"/>
        <dbReference type="EC" id="3.6.4.13"/>
    </reaction>
</comment>
<comment type="subcellular location">
    <subcellularLocation>
        <location evidence="4">Nucleus</location>
    </subcellularLocation>
</comment>
<comment type="similarity">
    <text evidence="4">Belongs to the DEAD box helicase family. DDX5/DBP2 subfamily.</text>
</comment>
<name>DDX17_TRYBB</name>